<gene>
    <name type="ordered locus">YpAngola_A2890</name>
</gene>
<protein>
    <recommendedName>
        <fullName evidence="1">Nucleoid-associated protein YpAngola_A2890</fullName>
    </recommendedName>
</protein>
<accession>A9R0Q3</accession>
<comment type="function">
    <text evidence="1">Binds to DNA and alters its conformation. May be involved in regulation of gene expression, nucleoid organization and DNA protection.</text>
</comment>
<comment type="subunit">
    <text evidence="1">Homodimer.</text>
</comment>
<comment type="subcellular location">
    <subcellularLocation>
        <location evidence="1">Cytoplasm</location>
        <location evidence="1">Nucleoid</location>
    </subcellularLocation>
</comment>
<comment type="similarity">
    <text evidence="1">Belongs to the YbaB/EbfC family.</text>
</comment>
<name>Y2890_YERPG</name>
<sequence>MFGKGGIGNLMKQAQQMQEKMQQMQEEVAKLEVTGESGAGLVKVTINGAHNCRRVEIDPSLLVEDDKEMLEDLIAAALNDAARRIDETQKEKMASVSNGMQLPPGFKMPF</sequence>
<feature type="chain" id="PRO_1000114667" description="Nucleoid-associated protein YpAngola_A2890">
    <location>
        <begin position="1"/>
        <end position="110"/>
    </location>
</feature>
<feature type="region of interest" description="Disordered" evidence="2">
    <location>
        <begin position="90"/>
        <end position="110"/>
    </location>
</feature>
<organism>
    <name type="scientific">Yersinia pestis bv. Antiqua (strain Angola)</name>
    <dbReference type="NCBI Taxonomy" id="349746"/>
    <lineage>
        <taxon>Bacteria</taxon>
        <taxon>Pseudomonadati</taxon>
        <taxon>Pseudomonadota</taxon>
        <taxon>Gammaproteobacteria</taxon>
        <taxon>Enterobacterales</taxon>
        <taxon>Yersiniaceae</taxon>
        <taxon>Yersinia</taxon>
    </lineage>
</organism>
<evidence type="ECO:0000255" key="1">
    <source>
        <dbReference type="HAMAP-Rule" id="MF_00274"/>
    </source>
</evidence>
<evidence type="ECO:0000256" key="2">
    <source>
        <dbReference type="SAM" id="MobiDB-lite"/>
    </source>
</evidence>
<dbReference type="EMBL" id="CP000901">
    <property type="protein sequence ID" value="ABX84963.1"/>
    <property type="molecule type" value="Genomic_DNA"/>
</dbReference>
<dbReference type="RefSeq" id="WP_002208604.1">
    <property type="nucleotide sequence ID" value="NZ_CP009935.1"/>
</dbReference>
<dbReference type="SMR" id="A9R0Q3"/>
<dbReference type="KEGG" id="ypg:YpAngola_A2890"/>
<dbReference type="PATRIC" id="fig|349746.12.peg.3928"/>
<dbReference type="GO" id="GO:0043590">
    <property type="term" value="C:bacterial nucleoid"/>
    <property type="evidence" value="ECO:0007669"/>
    <property type="project" value="UniProtKB-UniRule"/>
</dbReference>
<dbReference type="GO" id="GO:0005829">
    <property type="term" value="C:cytosol"/>
    <property type="evidence" value="ECO:0007669"/>
    <property type="project" value="TreeGrafter"/>
</dbReference>
<dbReference type="GO" id="GO:0003677">
    <property type="term" value="F:DNA binding"/>
    <property type="evidence" value="ECO:0007669"/>
    <property type="project" value="UniProtKB-UniRule"/>
</dbReference>
<dbReference type="FunFam" id="3.30.1310.10:FF:000001">
    <property type="entry name" value="Nucleoid-associated protein YbaB"/>
    <property type="match status" value="1"/>
</dbReference>
<dbReference type="Gene3D" id="3.30.1310.10">
    <property type="entry name" value="Nucleoid-associated protein YbaB-like domain"/>
    <property type="match status" value="1"/>
</dbReference>
<dbReference type="HAMAP" id="MF_00274">
    <property type="entry name" value="DNA_YbaB_EbfC"/>
    <property type="match status" value="1"/>
</dbReference>
<dbReference type="InterPro" id="IPR036894">
    <property type="entry name" value="YbaB-like_sf"/>
</dbReference>
<dbReference type="InterPro" id="IPR004401">
    <property type="entry name" value="YbaB/EbfC"/>
</dbReference>
<dbReference type="NCBIfam" id="TIGR00103">
    <property type="entry name" value="DNA_YbaB_EbfC"/>
    <property type="match status" value="1"/>
</dbReference>
<dbReference type="PANTHER" id="PTHR33449">
    <property type="entry name" value="NUCLEOID-ASSOCIATED PROTEIN YBAB"/>
    <property type="match status" value="1"/>
</dbReference>
<dbReference type="PANTHER" id="PTHR33449:SF1">
    <property type="entry name" value="NUCLEOID-ASSOCIATED PROTEIN YBAB"/>
    <property type="match status" value="1"/>
</dbReference>
<dbReference type="Pfam" id="PF02575">
    <property type="entry name" value="YbaB_DNA_bd"/>
    <property type="match status" value="1"/>
</dbReference>
<dbReference type="PIRSF" id="PIRSF004555">
    <property type="entry name" value="UCP004555"/>
    <property type="match status" value="1"/>
</dbReference>
<dbReference type="SUPFAM" id="SSF82607">
    <property type="entry name" value="YbaB-like"/>
    <property type="match status" value="1"/>
</dbReference>
<proteinExistence type="inferred from homology"/>
<reference key="1">
    <citation type="journal article" date="2010" name="J. Bacteriol.">
        <title>Genome sequence of the deep-rooted Yersinia pestis strain Angola reveals new insights into the evolution and pangenome of the plague bacterium.</title>
        <authorList>
            <person name="Eppinger M."/>
            <person name="Worsham P.L."/>
            <person name="Nikolich M.P."/>
            <person name="Riley D.R."/>
            <person name="Sebastian Y."/>
            <person name="Mou S."/>
            <person name="Achtman M."/>
            <person name="Lindler L.E."/>
            <person name="Ravel J."/>
        </authorList>
    </citation>
    <scope>NUCLEOTIDE SEQUENCE [LARGE SCALE GENOMIC DNA]</scope>
    <source>
        <strain>Angola</strain>
    </source>
</reference>
<keyword id="KW-0963">Cytoplasm</keyword>
<keyword id="KW-0238">DNA-binding</keyword>